<keyword id="KW-0002">3D-structure</keyword>
<keyword id="KW-0025">Alternative splicing</keyword>
<keyword id="KW-0963">Cytoplasm</keyword>
<keyword id="KW-1267">Proteomics identification</keyword>
<keyword id="KW-1185">Reference proteome</keyword>
<keyword id="KW-0677">Repeat</keyword>
<keyword id="KW-0808">Transferase</keyword>
<keyword id="KW-0833">Ubl conjugation pathway</keyword>
<name>HERC6_HUMAN</name>
<sequence length="1022" mass="115126">MYFCWGADSRELQRRRTAGSPGAELLQAASGERHSLLLLTNHRVLSCGDNSRGQLGRRGAQRGELPEPIQALETLIVDLVSCGKEHSLAVCHKGRVFAWGAGSEGQLGIGEFKEISFTPKKIMTLNDIKIIQVSCGHYHSLALSKDSQVFSWGKNSHGQLGLGKEFPSQASPQRVRSLEGIPLAQVAAGGAHSFALSLCGTSFGWGSNSAGQLALSGRNVPVQSNKPLSVGALKNLGVVYISCGDAHTAVLTQDGKVFTFGDNRSGQLGYSPTPEKRGPQLVERIDGLVSQIDCGSYHTLAYVHTTGQVVSFGHGPSDTSKPTHPEALTENFDISCLISAEDFVDVQVKHIFAGTYANFVTTHQDTSSTRAPGKTLPEISRISQSMAEKWIAVKRRSTEHEMAKSEIRMIFSSPACLTASFLKKRGTGETTSIDVDLEMARDTFKKLTKKEWISSMITTCLEDDLLRALPCHSPHQEALSVFLLLPECPVMHDSKNWKNLVVPFAKAVCEMSKQSLQVLKKCWAFLQESSLNPLIQMLKAAIISQLLHQTKTEQDHCNVKALLGMMKELHKVNKANCRLPENTFNINELSNLLNFYIDRGRQLFRDNHLIPAETPSPVIFSDFPFIFNSLSKIKLLQADSHIKMQMSEKKAYMLMHETILQKKDEFPPSPRFILRVRRSRLVKDALRQLSQAEATDFCKVLVVEFINEICPESGGVSSEFFHCMFEEMTKPEYGMFMYPEMGSCMWFPAKPKPEKKRYFLFGMLCGLSLFNLNVANLPFPLALYKKLLDQKPSLEDLKELSPRLGKSLQEVLDDAADDIGDALCIRFSIHWDQNDVDLIPNGISIPVDQTNKRDYVSKYIDYIFNVSVKAVYEEFQRGFYRVCEKEILRHFYPEELMTAIIGNTDYDWKQFEQNSKYEQGYQKSHPTIQLFWKAFHKLTLDEKKKFLFFLTGRDRLHARGIQKMEIVFRCPETFSERDHPTSITCHNILSLPKYSTMERMEEALQVAINNNRGFVSPMLTQS</sequence>
<reference key="1">
    <citation type="journal article" date="2005" name="Genomics">
        <title>The human HERC family of ubiquitin ligases: novel members, genomic organization, expression profiling, and evolutionary aspects.</title>
        <authorList>
            <person name="Hochrainer K."/>
            <person name="Mayer H."/>
            <person name="Baranyi U."/>
            <person name="Binder B.R."/>
            <person name="Lipp J."/>
            <person name="Kroismayr R."/>
        </authorList>
    </citation>
    <scope>NUCLEOTIDE SEQUENCE [MRNA] (ISOFORMS 1 AND 2)</scope>
    <scope>TISSUE SPECIFICITY</scope>
    <scope>DEVELOPMENTAL STAGE</scope>
    <scope>SUBCELLULAR LOCATION</scope>
    <source>
        <tissue>Endothelial cell</tissue>
        <tissue>T-cell</tissue>
    </source>
</reference>
<reference key="2">
    <citation type="journal article" date="2004" name="Nat. Genet.">
        <title>Complete sequencing and characterization of 21,243 full-length human cDNAs.</title>
        <authorList>
            <person name="Ota T."/>
            <person name="Suzuki Y."/>
            <person name="Nishikawa T."/>
            <person name="Otsuki T."/>
            <person name="Sugiyama T."/>
            <person name="Irie R."/>
            <person name="Wakamatsu A."/>
            <person name="Hayashi K."/>
            <person name="Sato H."/>
            <person name="Nagai K."/>
            <person name="Kimura K."/>
            <person name="Makita H."/>
            <person name="Sekine M."/>
            <person name="Obayashi M."/>
            <person name="Nishi T."/>
            <person name="Shibahara T."/>
            <person name="Tanaka T."/>
            <person name="Ishii S."/>
            <person name="Yamamoto J."/>
            <person name="Saito K."/>
            <person name="Kawai Y."/>
            <person name="Isono Y."/>
            <person name="Nakamura Y."/>
            <person name="Nagahari K."/>
            <person name="Murakami K."/>
            <person name="Yasuda T."/>
            <person name="Iwayanagi T."/>
            <person name="Wagatsuma M."/>
            <person name="Shiratori A."/>
            <person name="Sudo H."/>
            <person name="Hosoiri T."/>
            <person name="Kaku Y."/>
            <person name="Kodaira H."/>
            <person name="Kondo H."/>
            <person name="Sugawara M."/>
            <person name="Takahashi M."/>
            <person name="Kanda K."/>
            <person name="Yokoi T."/>
            <person name="Furuya T."/>
            <person name="Kikkawa E."/>
            <person name="Omura Y."/>
            <person name="Abe K."/>
            <person name="Kamihara K."/>
            <person name="Katsuta N."/>
            <person name="Sato K."/>
            <person name="Tanikawa M."/>
            <person name="Yamazaki M."/>
            <person name="Ninomiya K."/>
            <person name="Ishibashi T."/>
            <person name="Yamashita H."/>
            <person name="Murakawa K."/>
            <person name="Fujimori K."/>
            <person name="Tanai H."/>
            <person name="Kimata M."/>
            <person name="Watanabe M."/>
            <person name="Hiraoka S."/>
            <person name="Chiba Y."/>
            <person name="Ishida S."/>
            <person name="Ono Y."/>
            <person name="Takiguchi S."/>
            <person name="Watanabe S."/>
            <person name="Yosida M."/>
            <person name="Hotuta T."/>
            <person name="Kusano J."/>
            <person name="Kanehori K."/>
            <person name="Takahashi-Fujii A."/>
            <person name="Hara H."/>
            <person name="Tanase T.-O."/>
            <person name="Nomura Y."/>
            <person name="Togiya S."/>
            <person name="Komai F."/>
            <person name="Hara R."/>
            <person name="Takeuchi K."/>
            <person name="Arita M."/>
            <person name="Imose N."/>
            <person name="Musashino K."/>
            <person name="Yuuki H."/>
            <person name="Oshima A."/>
            <person name="Sasaki N."/>
            <person name="Aotsuka S."/>
            <person name="Yoshikawa Y."/>
            <person name="Matsunawa H."/>
            <person name="Ichihara T."/>
            <person name="Shiohata N."/>
            <person name="Sano S."/>
            <person name="Moriya S."/>
            <person name="Momiyama H."/>
            <person name="Satoh N."/>
            <person name="Takami S."/>
            <person name="Terashima Y."/>
            <person name="Suzuki O."/>
            <person name="Nakagawa S."/>
            <person name="Senoh A."/>
            <person name="Mizoguchi H."/>
            <person name="Goto Y."/>
            <person name="Shimizu F."/>
            <person name="Wakebe H."/>
            <person name="Hishigaki H."/>
            <person name="Watanabe T."/>
            <person name="Sugiyama A."/>
            <person name="Takemoto M."/>
            <person name="Kawakami B."/>
            <person name="Yamazaki M."/>
            <person name="Watanabe K."/>
            <person name="Kumagai A."/>
            <person name="Itakura S."/>
            <person name="Fukuzumi Y."/>
            <person name="Fujimori Y."/>
            <person name="Komiyama M."/>
            <person name="Tashiro H."/>
            <person name="Tanigami A."/>
            <person name="Fujiwara T."/>
            <person name="Ono T."/>
            <person name="Yamada K."/>
            <person name="Fujii Y."/>
            <person name="Ozaki K."/>
            <person name="Hirao M."/>
            <person name="Ohmori Y."/>
            <person name="Kawabata A."/>
            <person name="Hikiji T."/>
            <person name="Kobatake N."/>
            <person name="Inagaki H."/>
            <person name="Ikema Y."/>
            <person name="Okamoto S."/>
            <person name="Okitani R."/>
            <person name="Kawakami T."/>
            <person name="Noguchi S."/>
            <person name="Itoh T."/>
            <person name="Shigeta K."/>
            <person name="Senba T."/>
            <person name="Matsumura K."/>
            <person name="Nakajima Y."/>
            <person name="Mizuno T."/>
            <person name="Morinaga M."/>
            <person name="Sasaki M."/>
            <person name="Togashi T."/>
            <person name="Oyama M."/>
            <person name="Hata H."/>
            <person name="Watanabe M."/>
            <person name="Komatsu T."/>
            <person name="Mizushima-Sugano J."/>
            <person name="Satoh T."/>
            <person name="Shirai Y."/>
            <person name="Takahashi Y."/>
            <person name="Nakagawa K."/>
            <person name="Okumura K."/>
            <person name="Nagase T."/>
            <person name="Nomura N."/>
            <person name="Kikuchi H."/>
            <person name="Masuho Y."/>
            <person name="Yamashita R."/>
            <person name="Nakai K."/>
            <person name="Yada T."/>
            <person name="Nakamura Y."/>
            <person name="Ohara O."/>
            <person name="Isogai T."/>
            <person name="Sugano S."/>
        </authorList>
    </citation>
    <scope>NUCLEOTIDE SEQUENCE [LARGE SCALE MRNA] (ISOFORM 1)</scope>
    <scope>NUCLEOTIDE SEQUENCE [LARGE SCALE MRNA] OF 24-1022 (ISOFORM 3)</scope>
    <source>
        <tissue>Gastric carcinoma</tissue>
        <tissue>Hippocampus</tissue>
        <tissue>Placenta</tissue>
    </source>
</reference>
<reference key="3">
    <citation type="journal article" date="2004" name="Genome Res.">
        <title>The status, quality, and expansion of the NIH full-length cDNA project: the Mammalian Gene Collection (MGC).</title>
        <authorList>
            <consortium name="The MGC Project Team"/>
        </authorList>
    </citation>
    <scope>NUCLEOTIDE SEQUENCE [LARGE SCALE MRNA] (ISOFORM 1)</scope>
    <source>
        <tissue>Ovary</tissue>
        <tissue>Uterus</tissue>
    </source>
</reference>
<reference key="4">
    <citation type="journal article" date="2007" name="BMC Genomics">
        <title>The full-ORF clone resource of the German cDNA consortium.</title>
        <authorList>
            <person name="Bechtel S."/>
            <person name="Rosenfelder H."/>
            <person name="Duda A."/>
            <person name="Schmidt C.P."/>
            <person name="Ernst U."/>
            <person name="Wellenreuther R."/>
            <person name="Mehrle A."/>
            <person name="Schuster C."/>
            <person name="Bahr A."/>
            <person name="Bloecker H."/>
            <person name="Heubner D."/>
            <person name="Hoerlein A."/>
            <person name="Michel G."/>
            <person name="Wedler H."/>
            <person name="Koehrer K."/>
            <person name="Ottenwaelder B."/>
            <person name="Poustka A."/>
            <person name="Wiemann S."/>
            <person name="Schupp I."/>
        </authorList>
    </citation>
    <scope>NUCLEOTIDE SEQUENCE [LARGE SCALE MRNA] OF 48-1022</scope>
    <source>
        <tissue>Endometrium</tissue>
        <tissue>Lymph node</tissue>
    </source>
</reference>
<accession>Q8IVU3</accession>
<accession>B4DIY5</accession>
<accession>Q5GC90</accession>
<accession>Q5GRH3</accession>
<accession>Q5HYM6</accession>
<accession>Q5JPB6</accession>
<accession>Q6PIF4</accession>
<accession>Q8NAN3</accession>
<accession>Q9NWS4</accession>
<protein>
    <recommendedName>
        <fullName>Probable E3 ubiquitin-protein ligase HERC6</fullName>
        <ecNumber>2.3.2.26</ecNumber>
    </recommendedName>
    <alternativeName>
        <fullName>HECT domain and RCC1-like domain-containing protein 6</fullName>
    </alternativeName>
    <alternativeName>
        <fullName>HECT-type E3 ubiquitin transferase HERC6</fullName>
    </alternativeName>
</protein>
<proteinExistence type="evidence at protein level"/>
<feature type="chain" id="PRO_0000278219" description="Probable E3 ubiquitin-protein ligase HERC6">
    <location>
        <begin position="1"/>
        <end position="1022"/>
    </location>
</feature>
<feature type="repeat" description="RCC1 1">
    <location>
        <begin position="41"/>
        <end position="92"/>
    </location>
</feature>
<feature type="repeat" description="RCC1 2">
    <location>
        <begin position="93"/>
        <end position="145"/>
    </location>
</feature>
<feature type="repeat" description="RCC1 3">
    <location>
        <begin position="147"/>
        <end position="198"/>
    </location>
</feature>
<feature type="repeat" description="RCC1 4">
    <location>
        <begin position="200"/>
        <end position="253"/>
    </location>
</feature>
<feature type="repeat" description="RCC1 5">
    <location>
        <begin position="254"/>
        <end position="304"/>
    </location>
</feature>
<feature type="domain" description="HECT" evidence="2">
    <location>
        <begin position="693"/>
        <end position="1017"/>
    </location>
</feature>
<feature type="active site" description="Glycyl thioester intermediate" evidence="2">
    <location>
        <position position="985"/>
    </location>
</feature>
<feature type="splice variant" id="VSP_023183" description="In isoform 3." evidence="4">
    <original>SYHTLAYVHTT</original>
    <variation>RNSKHGFMTFF</variation>
    <location>
        <begin position="296"/>
        <end position="306"/>
    </location>
</feature>
<feature type="splice variant" id="VSP_023184" description="In isoform 3." evidence="4">
    <location>
        <begin position="307"/>
        <end position="1022"/>
    </location>
</feature>
<feature type="splice variant" id="VSP_023185" description="In isoform 2." evidence="5">
    <location>
        <begin position="610"/>
        <end position="645"/>
    </location>
</feature>
<feature type="sequence variant" id="VAR_051725" description="In dbSNP:rs7677237.">
    <original>M</original>
    <variation>T</variation>
    <location>
        <position position="123"/>
    </location>
</feature>
<feature type="sequence variant" id="VAR_051726" description="In dbSNP:rs12510688.">
    <original>C</original>
    <variation>R</variation>
    <location>
        <position position="199"/>
    </location>
</feature>
<feature type="sequence variant" id="VAR_051727" description="In dbSNP:rs17014118.">
    <original>F</original>
    <variation>L</variation>
    <location>
        <position position="343"/>
    </location>
</feature>
<feature type="sequence variant" id="VAR_051728" description="In dbSNP:rs6532068.">
    <original>T</original>
    <variation>I</variation>
    <location>
        <position position="614"/>
    </location>
</feature>
<feature type="sequence conflict" description="In Ref. 2; BAA91303." evidence="6" ref="2">
    <original>G</original>
    <variation>C</variation>
    <location>
        <position position="742"/>
    </location>
</feature>
<feature type="helix" evidence="7">
    <location>
        <begin position="908"/>
        <end position="913"/>
    </location>
</feature>
<feature type="helix" evidence="7">
    <location>
        <begin position="926"/>
        <end position="935"/>
    </location>
</feature>
<feature type="helix" evidence="7">
    <location>
        <begin position="940"/>
        <end position="950"/>
    </location>
</feature>
<feature type="helix" evidence="7">
    <location>
        <begin position="958"/>
        <end position="963"/>
    </location>
</feature>
<feature type="strand" evidence="7">
    <location>
        <begin position="967"/>
        <end position="969"/>
    </location>
</feature>
<feature type="strand" evidence="7">
    <location>
        <begin position="984"/>
        <end position="990"/>
    </location>
</feature>
<feature type="helix" evidence="7">
    <location>
        <begin position="997"/>
        <end position="1008"/>
    </location>
</feature>
<gene>
    <name type="primary">HERC6</name>
</gene>
<evidence type="ECO:0000250" key="1"/>
<evidence type="ECO:0000255" key="2">
    <source>
        <dbReference type="PROSITE-ProRule" id="PRU00104"/>
    </source>
</evidence>
<evidence type="ECO:0000269" key="3">
    <source>
    </source>
</evidence>
<evidence type="ECO:0000303" key="4">
    <source>
    </source>
</evidence>
<evidence type="ECO:0000303" key="5">
    <source>
    </source>
</evidence>
<evidence type="ECO:0000305" key="6"/>
<evidence type="ECO:0007829" key="7">
    <source>
        <dbReference type="PDB" id="5W87"/>
    </source>
</evidence>
<dbReference type="EC" id="2.3.2.26"/>
<dbReference type="EMBL" id="AF336798">
    <property type="protein sequence ID" value="AAQ14893.1"/>
    <property type="molecule type" value="mRNA"/>
</dbReference>
<dbReference type="EMBL" id="AY653201">
    <property type="protein sequence ID" value="AAV66895.1"/>
    <property type="molecule type" value="mRNA"/>
</dbReference>
<dbReference type="EMBL" id="AK000644">
    <property type="protein sequence ID" value="BAA91303.1"/>
    <property type="status" value="ALT_INIT"/>
    <property type="molecule type" value="mRNA"/>
</dbReference>
<dbReference type="EMBL" id="AK092403">
    <property type="protein sequence ID" value="BAC03879.1"/>
    <property type="status" value="ALT_INIT"/>
    <property type="molecule type" value="mRNA"/>
</dbReference>
<dbReference type="EMBL" id="AK295832">
    <property type="protein sequence ID" value="BAG58647.1"/>
    <property type="molecule type" value="mRNA"/>
</dbReference>
<dbReference type="EMBL" id="BC035775">
    <property type="protein sequence ID" value="AAH35775.2"/>
    <property type="molecule type" value="mRNA"/>
</dbReference>
<dbReference type="EMBL" id="BC042047">
    <property type="protein sequence ID" value="AAH42047.2"/>
    <property type="molecule type" value="mRNA"/>
</dbReference>
<dbReference type="EMBL" id="AL833664">
    <property type="protein sequence ID" value="CAI46151.1"/>
    <property type="status" value="ALT_INIT"/>
    <property type="molecule type" value="mRNA"/>
</dbReference>
<dbReference type="EMBL" id="BX647121">
    <property type="protein sequence ID" value="CAI46056.1"/>
    <property type="status" value="ALT_INIT"/>
    <property type="molecule type" value="mRNA"/>
</dbReference>
<dbReference type="CCDS" id="CCDS47098.1">
    <molecule id="Q8IVU3-1"/>
</dbReference>
<dbReference type="CCDS" id="CCDS54777.1">
    <molecule id="Q8IVU3-2"/>
</dbReference>
<dbReference type="RefSeq" id="NP_001158608.1">
    <molecule id="Q8IVU3-2"/>
    <property type="nucleotide sequence ID" value="NM_001165136.2"/>
</dbReference>
<dbReference type="RefSeq" id="NP_060382.3">
    <molecule id="Q8IVU3-1"/>
    <property type="nucleotide sequence ID" value="NM_017912.3"/>
</dbReference>
<dbReference type="PDB" id="5W87">
    <property type="method" value="X-ray"/>
    <property type="resolution" value="2.20 A"/>
    <property type="chains" value="A/B=902-1022"/>
</dbReference>
<dbReference type="PDBsum" id="5W87"/>
<dbReference type="SMR" id="Q8IVU3"/>
<dbReference type="BioGRID" id="120340">
    <property type="interactions" value="15"/>
</dbReference>
<dbReference type="FunCoup" id="Q8IVU3">
    <property type="interactions" value="701"/>
</dbReference>
<dbReference type="IntAct" id="Q8IVU3">
    <property type="interactions" value="4"/>
</dbReference>
<dbReference type="STRING" id="9606.ENSP00000264346"/>
<dbReference type="GlyGen" id="Q8IVU3">
    <property type="glycosylation" value="3 sites, 1 N-linked glycan (1 site), 1 O-linked glycan (1 site)"/>
</dbReference>
<dbReference type="iPTMnet" id="Q8IVU3"/>
<dbReference type="PhosphoSitePlus" id="Q8IVU3"/>
<dbReference type="BioMuta" id="HERC6"/>
<dbReference type="DMDM" id="74750679"/>
<dbReference type="jPOST" id="Q8IVU3"/>
<dbReference type="MassIVE" id="Q8IVU3"/>
<dbReference type="PaxDb" id="9606-ENSP00000264346"/>
<dbReference type="PeptideAtlas" id="Q8IVU3"/>
<dbReference type="ProteomicsDB" id="70770">
    <molecule id="Q8IVU3-1"/>
</dbReference>
<dbReference type="ProteomicsDB" id="70771">
    <molecule id="Q8IVU3-2"/>
</dbReference>
<dbReference type="ProteomicsDB" id="70772">
    <molecule id="Q8IVU3-3"/>
</dbReference>
<dbReference type="Antibodypedia" id="25568">
    <property type="antibodies" value="59 antibodies from 15 providers"/>
</dbReference>
<dbReference type="DNASU" id="55008"/>
<dbReference type="Ensembl" id="ENST00000264346.12">
    <molecule id="Q8IVU3-1"/>
    <property type="protein sequence ID" value="ENSP00000264346.8"/>
    <property type="gene ID" value="ENSG00000138642.16"/>
</dbReference>
<dbReference type="Ensembl" id="ENST00000380265.9">
    <molecule id="Q8IVU3-2"/>
    <property type="protein sequence ID" value="ENSP00000369617.5"/>
    <property type="gene ID" value="ENSG00000138642.16"/>
</dbReference>
<dbReference type="GeneID" id="55008"/>
<dbReference type="KEGG" id="hsa:55008"/>
<dbReference type="MANE-Select" id="ENST00000264346.12">
    <property type="protein sequence ID" value="ENSP00000264346.8"/>
    <property type="RefSeq nucleotide sequence ID" value="NM_017912.4"/>
    <property type="RefSeq protein sequence ID" value="NP_060382.3"/>
</dbReference>
<dbReference type="UCSC" id="uc011cdi.3">
    <molecule id="Q8IVU3-1"/>
    <property type="organism name" value="human"/>
</dbReference>
<dbReference type="AGR" id="HGNC:26072"/>
<dbReference type="CTD" id="55008"/>
<dbReference type="DisGeNET" id="55008"/>
<dbReference type="GeneCards" id="HERC6"/>
<dbReference type="HGNC" id="HGNC:26072">
    <property type="gene designation" value="HERC6"/>
</dbReference>
<dbReference type="HPA" id="ENSG00000138642">
    <property type="expression patterns" value="Low tissue specificity"/>
</dbReference>
<dbReference type="MIM" id="609249">
    <property type="type" value="gene"/>
</dbReference>
<dbReference type="neXtProt" id="NX_Q8IVU3"/>
<dbReference type="OpenTargets" id="ENSG00000138642"/>
<dbReference type="PharmGKB" id="PA134894313"/>
<dbReference type="VEuPathDB" id="HostDB:ENSG00000138642"/>
<dbReference type="eggNOG" id="KOG0941">
    <property type="taxonomic scope" value="Eukaryota"/>
</dbReference>
<dbReference type="GeneTree" id="ENSGT00940000162279"/>
<dbReference type="HOGENOM" id="CLU_002173_5_3_1"/>
<dbReference type="InParanoid" id="Q8IVU3"/>
<dbReference type="OMA" id="NFVTTYQ"/>
<dbReference type="OrthoDB" id="8068875at2759"/>
<dbReference type="PAN-GO" id="Q8IVU3">
    <property type="GO annotations" value="5 GO annotations based on evolutionary models"/>
</dbReference>
<dbReference type="PhylomeDB" id="Q8IVU3"/>
<dbReference type="TreeFam" id="TF315189"/>
<dbReference type="PathwayCommons" id="Q8IVU3"/>
<dbReference type="Reactome" id="R-HSA-983168">
    <property type="pathway name" value="Antigen processing: Ubiquitination &amp; Proteasome degradation"/>
</dbReference>
<dbReference type="SignaLink" id="Q8IVU3"/>
<dbReference type="SIGNOR" id="Q8IVU3"/>
<dbReference type="UniPathway" id="UPA00143"/>
<dbReference type="BioGRID-ORCS" id="55008">
    <property type="hits" value="15 hits in 1198 CRISPR screens"/>
</dbReference>
<dbReference type="ChiTaRS" id="HERC6">
    <property type="organism name" value="human"/>
</dbReference>
<dbReference type="GenomeRNAi" id="55008"/>
<dbReference type="Pharos" id="Q8IVU3">
    <property type="development level" value="Tbio"/>
</dbReference>
<dbReference type="PRO" id="PR:Q8IVU3"/>
<dbReference type="Proteomes" id="UP000005640">
    <property type="component" value="Chromosome 4"/>
</dbReference>
<dbReference type="RNAct" id="Q8IVU3">
    <property type="molecule type" value="protein"/>
</dbReference>
<dbReference type="Bgee" id="ENSG00000138642">
    <property type="expression patterns" value="Expressed in secondary oocyte and 175 other cell types or tissues"/>
</dbReference>
<dbReference type="ExpressionAtlas" id="Q8IVU3">
    <property type="expression patterns" value="baseline and differential"/>
</dbReference>
<dbReference type="GO" id="GO:0005737">
    <property type="term" value="C:cytoplasm"/>
    <property type="evidence" value="ECO:0000318"/>
    <property type="project" value="GO_Central"/>
</dbReference>
<dbReference type="GO" id="GO:0005829">
    <property type="term" value="C:cytosol"/>
    <property type="evidence" value="ECO:0000314"/>
    <property type="project" value="HPA"/>
</dbReference>
<dbReference type="GO" id="GO:0005654">
    <property type="term" value="C:nucleoplasm"/>
    <property type="evidence" value="ECO:0000314"/>
    <property type="project" value="HPA"/>
</dbReference>
<dbReference type="GO" id="GO:0061630">
    <property type="term" value="F:ubiquitin protein ligase activity"/>
    <property type="evidence" value="ECO:0000318"/>
    <property type="project" value="GO_Central"/>
</dbReference>
<dbReference type="GO" id="GO:0002244">
    <property type="term" value="P:hematopoietic progenitor cell differentiation"/>
    <property type="evidence" value="ECO:0007669"/>
    <property type="project" value="Ensembl"/>
</dbReference>
<dbReference type="GO" id="GO:0016567">
    <property type="term" value="P:protein ubiquitination"/>
    <property type="evidence" value="ECO:0000318"/>
    <property type="project" value="GO_Central"/>
</dbReference>
<dbReference type="GO" id="GO:0009617">
    <property type="term" value="P:response to bacterium"/>
    <property type="evidence" value="ECO:0007669"/>
    <property type="project" value="Ensembl"/>
</dbReference>
<dbReference type="GO" id="GO:0006511">
    <property type="term" value="P:ubiquitin-dependent protein catabolic process"/>
    <property type="evidence" value="ECO:0000318"/>
    <property type="project" value="GO_Central"/>
</dbReference>
<dbReference type="CDD" id="cd00078">
    <property type="entry name" value="HECTc"/>
    <property type="match status" value="1"/>
</dbReference>
<dbReference type="FunFam" id="2.130.10.30:FF:000049">
    <property type="entry name" value="HECT and RLD domain containing E3 ubiquitin protein ligase family member 6"/>
    <property type="match status" value="1"/>
</dbReference>
<dbReference type="FunFam" id="3.30.2160.10:FF:000004">
    <property type="entry name" value="probable E3 ubiquitin-protein ligase HERC4 isoform X1"/>
    <property type="match status" value="1"/>
</dbReference>
<dbReference type="FunFam" id="3.30.2410.10:FF:000003">
    <property type="entry name" value="probable E3 ubiquitin-protein ligase HERC4 isoform X1"/>
    <property type="match status" value="1"/>
</dbReference>
<dbReference type="Gene3D" id="3.30.2160.10">
    <property type="entry name" value="Hect, E3 ligase catalytic domain"/>
    <property type="match status" value="1"/>
</dbReference>
<dbReference type="Gene3D" id="3.30.2410.10">
    <property type="entry name" value="Hect, E3 ligase catalytic domain"/>
    <property type="match status" value="1"/>
</dbReference>
<dbReference type="Gene3D" id="3.90.1750.10">
    <property type="entry name" value="Hect, E3 ligase catalytic domains"/>
    <property type="match status" value="1"/>
</dbReference>
<dbReference type="Gene3D" id="2.130.10.30">
    <property type="entry name" value="Regulator of chromosome condensation 1/beta-lactamase-inhibitor protein II"/>
    <property type="match status" value="2"/>
</dbReference>
<dbReference type="InterPro" id="IPR000569">
    <property type="entry name" value="HECT_dom"/>
</dbReference>
<dbReference type="InterPro" id="IPR035983">
    <property type="entry name" value="Hect_E3_ubiquitin_ligase"/>
</dbReference>
<dbReference type="InterPro" id="IPR009091">
    <property type="entry name" value="RCC1/BLIP-II"/>
</dbReference>
<dbReference type="InterPro" id="IPR000408">
    <property type="entry name" value="Reg_chr_condens"/>
</dbReference>
<dbReference type="InterPro" id="IPR051709">
    <property type="entry name" value="Ub-ligase/GTPase-reg"/>
</dbReference>
<dbReference type="PANTHER" id="PTHR45622:SF11">
    <property type="entry name" value="E3 UBIQUITIN-PROTEIN LIGASE HERC6-RELATED"/>
    <property type="match status" value="1"/>
</dbReference>
<dbReference type="PANTHER" id="PTHR45622">
    <property type="entry name" value="UBIQUITIN-PROTEIN LIGASE E3A-RELATED"/>
    <property type="match status" value="1"/>
</dbReference>
<dbReference type="Pfam" id="PF00632">
    <property type="entry name" value="HECT"/>
    <property type="match status" value="1"/>
</dbReference>
<dbReference type="Pfam" id="PF25390">
    <property type="entry name" value="WD40_RLD"/>
    <property type="match status" value="1"/>
</dbReference>
<dbReference type="PRINTS" id="PR00633">
    <property type="entry name" value="RCCNDNSATION"/>
</dbReference>
<dbReference type="SMART" id="SM00119">
    <property type="entry name" value="HECTc"/>
    <property type="match status" value="1"/>
</dbReference>
<dbReference type="SUPFAM" id="SSF56204">
    <property type="entry name" value="Hect, E3 ligase catalytic domain"/>
    <property type="match status" value="1"/>
</dbReference>
<dbReference type="SUPFAM" id="SSF50985">
    <property type="entry name" value="RCC1/BLIP-II"/>
    <property type="match status" value="1"/>
</dbReference>
<dbReference type="PROSITE" id="PS50237">
    <property type="entry name" value="HECT"/>
    <property type="match status" value="1"/>
</dbReference>
<dbReference type="PROSITE" id="PS00626">
    <property type="entry name" value="RCC1_2"/>
    <property type="match status" value="3"/>
</dbReference>
<dbReference type="PROSITE" id="PS50012">
    <property type="entry name" value="RCC1_3"/>
    <property type="match status" value="5"/>
</dbReference>
<comment type="function">
    <text evidence="1">E3 ubiquitin-protein ligase which accepts ubiquitin from an E2 ubiquitin-conjugating enzyme in the form of a thioester and then directly transfers the ubiquitin to targeted substrates.</text>
</comment>
<comment type="catalytic activity">
    <reaction>
        <text>S-ubiquitinyl-[E2 ubiquitin-conjugating enzyme]-L-cysteine + [acceptor protein]-L-lysine = [E2 ubiquitin-conjugating enzyme]-L-cysteine + N(6)-ubiquitinyl-[acceptor protein]-L-lysine.</text>
        <dbReference type="EC" id="2.3.2.26"/>
    </reaction>
</comment>
<comment type="pathway">
    <text>Protein modification; protein ubiquitination.</text>
</comment>
<comment type="subcellular location">
    <subcellularLocation>
        <location evidence="3">Cytoplasm</location>
        <location evidence="3">Cytosol</location>
    </subcellularLocation>
</comment>
<comment type="alternative products">
    <event type="alternative splicing"/>
    <isoform>
        <id>Q8IVU3-1</id>
        <name>1</name>
        <sequence type="displayed"/>
    </isoform>
    <isoform>
        <id>Q8IVU3-2</id>
        <name>2</name>
        <sequence type="described" ref="VSP_023185"/>
    </isoform>
    <isoform>
        <id>Q8IVU3-3</id>
        <name>3</name>
        <sequence type="described" ref="VSP_023183 VSP_023184"/>
    </isoform>
</comment>
<comment type="tissue specificity">
    <text evidence="3">Detected in brain, heart, placenta and testis.</text>
</comment>
<comment type="developmental stage">
    <text evidence="3">Expressed in fetal brain.</text>
</comment>
<comment type="miscellaneous">
    <molecule>Isoform 1</molecule>
    <text>Major transcript.</text>
</comment>
<comment type="miscellaneous">
    <molecule>Isoform 2</molecule>
    <text evidence="6">Minor transcript.</text>
</comment>
<comment type="miscellaneous">
    <molecule>Isoform 3</molecule>
    <text evidence="6">Minor transcript.</text>
</comment>
<comment type="sequence caution" evidence="6">
    <conflict type="erroneous initiation">
        <sequence resource="EMBL-CDS" id="BAA91303"/>
    </conflict>
</comment>
<comment type="sequence caution" evidence="6">
    <conflict type="erroneous initiation">
        <sequence resource="EMBL-CDS" id="BAC03879"/>
    </conflict>
</comment>
<comment type="sequence caution" evidence="6">
    <conflict type="erroneous initiation">
        <sequence resource="EMBL-CDS" id="CAI46056"/>
    </conflict>
</comment>
<comment type="sequence caution" evidence="6">
    <conflict type="erroneous initiation">
        <sequence resource="EMBL-CDS" id="CAI46151"/>
    </conflict>
</comment>
<organism>
    <name type="scientific">Homo sapiens</name>
    <name type="common">Human</name>
    <dbReference type="NCBI Taxonomy" id="9606"/>
    <lineage>
        <taxon>Eukaryota</taxon>
        <taxon>Metazoa</taxon>
        <taxon>Chordata</taxon>
        <taxon>Craniata</taxon>
        <taxon>Vertebrata</taxon>
        <taxon>Euteleostomi</taxon>
        <taxon>Mammalia</taxon>
        <taxon>Eutheria</taxon>
        <taxon>Euarchontoglires</taxon>
        <taxon>Primates</taxon>
        <taxon>Haplorrhini</taxon>
        <taxon>Catarrhini</taxon>
        <taxon>Hominidae</taxon>
        <taxon>Homo</taxon>
    </lineage>
</organism>